<dbReference type="EC" id="2.4.1.-" evidence="4"/>
<dbReference type="EMBL" id="AMDS01123366">
    <property type="status" value="NOT_ANNOTATED_CDS"/>
    <property type="molecule type" value="Genomic_DNA"/>
</dbReference>
<dbReference type="EMBL" id="AMDS01123367">
    <property type="status" value="NOT_ANNOTATED_CDS"/>
    <property type="molecule type" value="Genomic_DNA"/>
</dbReference>
<dbReference type="EMBL" id="AMDS01123368">
    <property type="status" value="NOT_ANNOTATED_CDS"/>
    <property type="molecule type" value="Genomic_DNA"/>
</dbReference>
<dbReference type="RefSeq" id="XP_007647118.1">
    <property type="nucleotide sequence ID" value="XM_007648928.1"/>
</dbReference>
<dbReference type="RefSeq" id="XP_027255394.1">
    <property type="nucleotide sequence ID" value="XM_027399593.2"/>
</dbReference>
<dbReference type="RefSeq" id="XP_027255395.1">
    <property type="nucleotide sequence ID" value="XM_027399594.2"/>
</dbReference>
<dbReference type="RefSeq" id="XP_027255396.1">
    <property type="nucleotide sequence ID" value="XM_027399595.2"/>
</dbReference>
<dbReference type="RefSeq" id="XP_035295427.1">
    <property type="nucleotide sequence ID" value="XM_035439536.1"/>
</dbReference>
<dbReference type="RefSeq" id="XP_035315633.1">
    <property type="nucleotide sequence ID" value="XM_035459742.1"/>
</dbReference>
<dbReference type="Ensembl" id="ENSCGRT00000017905">
    <property type="protein sequence ID" value="ENSCGRP00000017646"/>
    <property type="gene ID" value="ENSCGRG00000012835"/>
</dbReference>
<dbReference type="Ensembl" id="ENSCGRT00001016474.1">
    <property type="protein sequence ID" value="ENSCGRP00001012241.1"/>
    <property type="gene ID" value="ENSCGRG00001013693.1"/>
</dbReference>
<dbReference type="Ensembl" id="ENSCGRT00015075699">
    <property type="protein sequence ID" value="ENSCGRP00015045391"/>
    <property type="gene ID" value="ENSCGRG00015016535"/>
</dbReference>
<dbReference type="GeneID" id="100770177"/>
<dbReference type="GeneTree" id="ENSGT00390000013174"/>
<dbReference type="OMA" id="GALFIWC"/>
<dbReference type="UniPathway" id="UPA00196"/>
<dbReference type="Proteomes" id="UP000694386">
    <property type="component" value="Unplaced"/>
</dbReference>
<dbReference type="Proteomes" id="UP001108280">
    <property type="component" value="Chromosome 2"/>
</dbReference>
<dbReference type="GO" id="GO:0005789">
    <property type="term" value="C:endoplasmic reticulum membrane"/>
    <property type="evidence" value="ECO:0007669"/>
    <property type="project" value="UniProtKB-SubCell"/>
</dbReference>
<dbReference type="GO" id="GO:0031501">
    <property type="term" value="C:mannosyltransferase complex"/>
    <property type="evidence" value="ECO:0007669"/>
    <property type="project" value="TreeGrafter"/>
</dbReference>
<dbReference type="GO" id="GO:0000009">
    <property type="term" value="F:alpha-1,6-mannosyltransferase activity"/>
    <property type="evidence" value="ECO:0007669"/>
    <property type="project" value="Ensembl"/>
</dbReference>
<dbReference type="GO" id="GO:0004376">
    <property type="term" value="F:glycolipid mannosyltransferase activity"/>
    <property type="evidence" value="ECO:0007669"/>
    <property type="project" value="InterPro"/>
</dbReference>
<dbReference type="GO" id="GO:0006506">
    <property type="term" value="P:GPI anchor biosynthetic process"/>
    <property type="evidence" value="ECO:0007669"/>
    <property type="project" value="UniProtKB-UniPathway"/>
</dbReference>
<dbReference type="InterPro" id="IPR007315">
    <property type="entry name" value="PIG-V/Gpi18"/>
</dbReference>
<dbReference type="PANTHER" id="PTHR12468">
    <property type="entry name" value="GPI MANNOSYLTRANSFERASE 2"/>
    <property type="match status" value="1"/>
</dbReference>
<dbReference type="PANTHER" id="PTHR12468:SF2">
    <property type="entry name" value="GPI MANNOSYLTRANSFERASE 2"/>
    <property type="match status" value="1"/>
</dbReference>
<dbReference type="Pfam" id="PF04188">
    <property type="entry name" value="Mannosyl_trans2"/>
    <property type="match status" value="1"/>
</dbReference>
<name>PIGV_CRIGR</name>
<sequence>MWSLDPSQKEVLRFAVSCRILTLMLQALFNIIIPDHHADAFSPPRLASSCSVDQLVEGLLGGLSRWDAEHFLFIAEHGYLYEHNFAFFPGFPLALLMGTELLRPLQGLLSQRSCLLVSVALLNFLFSVLAAVTLHDLGCLVLGCPRQAFYAAMLFCLSPANVFLAAGYSEALFAFLTFSAMGQLERGRSWASGLLFALATGVRSNGLVSVGFLLHAQCRGFFSSLVVLNPLKPLFKLMASLCLSVLTVSLPFALFQYYAYTQFCLPGSAHSVPEPLVQLAVDKGYRITGGNEPPWCSWGLPLVYSYIQDVYWNVGFLRYYELRQVPNFLLATPVAVLVVWAAWTYVTTHPWLCLTLGLRRSKDSKKTLEKPHPGFLSPKVFVYLVHAAGLLLFGSLCMHVQVLTRLLCSSTPVVYWFPAHLLQNQEPLLRSVDTVPEKLLEKNSPPGQKAPRNCIMKLLYNWRACSPVTRCILGYFLTYWLLGLLLHCNFLPWT</sequence>
<reference key="1">
    <citation type="journal article" date="2013" name="Nat. Biotechnol.">
        <title>Genomic landscapes of Chinese hamster ovary cell lines as revealed by the Cricetulus griseus draft genome.</title>
        <authorList>
            <person name="Lewis N.E."/>
            <person name="Liu X."/>
            <person name="Li Y."/>
            <person name="Nagarajan H."/>
            <person name="Yerganian G."/>
            <person name="O'Brien E."/>
            <person name="Bordbar A."/>
            <person name="Roth A.M."/>
            <person name="Rosenbloom J."/>
            <person name="Bian C."/>
            <person name="Xie M."/>
            <person name="Chen W."/>
            <person name="Li N."/>
            <person name="Baycin-Hizal D."/>
            <person name="Latif H."/>
            <person name="Forster J."/>
            <person name="Betenbaugh M.J."/>
            <person name="Famili I."/>
            <person name="Xu X."/>
            <person name="Wang J."/>
            <person name="Palsson B.O."/>
        </authorList>
    </citation>
    <scope>NUCLEOTIDE SEQUENCE [LARGE SCALE GENOMIC DNA]</scope>
</reference>
<reference key="2">
    <citation type="journal article" date="2013" name="J. Biochem.">
        <title>Glycosylphosphatidylinositol mannosyltransferase II is the rate-limiting enzyme in glycosylphosphatidylinositol biosynthesis under limited dolichol-phosphate mannose availability.</title>
        <authorList>
            <person name="Hirata T."/>
            <person name="Fujita M."/>
            <person name="Kanzawa N."/>
            <person name="Murakami Y."/>
            <person name="Maeda Y."/>
            <person name="Kinoshita T."/>
        </authorList>
    </citation>
    <scope>FUNCTION</scope>
    <scope>CATALYTIC ACTIVITY</scope>
    <scope>PATHWAY</scope>
</reference>
<feature type="chain" id="PRO_0000462342" description="GPI alpha-1,6-mannosyltransferase 2">
    <location>
        <begin position="1"/>
        <end position="494"/>
    </location>
</feature>
<feature type="topological domain" description="Cytoplasmic" evidence="1">
    <location>
        <begin position="1"/>
        <end position="13"/>
    </location>
</feature>
<feature type="transmembrane region" description="Helical" evidence="2">
    <location>
        <begin position="14"/>
        <end position="34"/>
    </location>
</feature>
<feature type="topological domain" description="Lumenal" evidence="1">
    <location>
        <begin position="35"/>
        <end position="77"/>
    </location>
</feature>
<feature type="transmembrane region" description="Helical" evidence="2">
    <location>
        <begin position="78"/>
        <end position="98"/>
    </location>
</feature>
<feature type="topological domain" description="Cytoplasmic" evidence="1">
    <location>
        <begin position="99"/>
        <end position="113"/>
    </location>
</feature>
<feature type="transmembrane region" description="Helical" evidence="2">
    <location>
        <begin position="114"/>
        <end position="134"/>
    </location>
</feature>
<feature type="topological domain" description="Lumenal" evidence="1">
    <location>
        <begin position="135"/>
        <end position="136"/>
    </location>
</feature>
<feature type="transmembrane region" description="Helical" evidence="2">
    <location>
        <begin position="137"/>
        <end position="157"/>
    </location>
</feature>
<feature type="topological domain" description="Cytoplasmic" evidence="1">
    <location>
        <begin position="158"/>
        <end position="161"/>
    </location>
</feature>
<feature type="transmembrane region" description="Helical" evidence="2">
    <location>
        <begin position="162"/>
        <end position="182"/>
    </location>
</feature>
<feature type="topological domain" description="Lumenal" evidence="1">
    <location>
        <begin position="183"/>
        <end position="192"/>
    </location>
</feature>
<feature type="transmembrane region" description="Helical" evidence="2">
    <location>
        <begin position="193"/>
        <end position="213"/>
    </location>
</feature>
<feature type="topological domain" description="Cytoplasmic" evidence="1">
    <location>
        <begin position="214"/>
        <end position="234"/>
    </location>
</feature>
<feature type="transmembrane region" description="Helical" evidence="2">
    <location>
        <begin position="235"/>
        <end position="255"/>
    </location>
</feature>
<feature type="topological domain" description="Lumenal" evidence="1">
    <location>
        <begin position="256"/>
        <end position="327"/>
    </location>
</feature>
<feature type="transmembrane region" description="Helical" evidence="2">
    <location>
        <begin position="328"/>
        <end position="348"/>
    </location>
</feature>
<feature type="topological domain" description="Cytoplasmic" evidence="1">
    <location>
        <begin position="349"/>
        <end position="379"/>
    </location>
</feature>
<feature type="transmembrane region" description="Helical" evidence="2">
    <location>
        <begin position="380"/>
        <end position="400"/>
    </location>
</feature>
<feature type="topological domain" description="Lumenal" evidence="1">
    <location>
        <begin position="401"/>
        <end position="470"/>
    </location>
</feature>
<feature type="transmembrane region" description="Helical" evidence="2">
    <location>
        <begin position="471"/>
        <end position="491"/>
    </location>
</feature>
<feature type="topological domain" description="Cytoplasmic" evidence="1">
    <location>
        <begin position="492"/>
        <end position="494"/>
    </location>
</feature>
<organism>
    <name type="scientific">Cricetulus griseus</name>
    <name type="common">Chinese hamster</name>
    <name type="synonym">Cricetulus barabensis griseus</name>
    <dbReference type="NCBI Taxonomy" id="10029"/>
    <lineage>
        <taxon>Eukaryota</taxon>
        <taxon>Metazoa</taxon>
        <taxon>Chordata</taxon>
        <taxon>Craniata</taxon>
        <taxon>Vertebrata</taxon>
        <taxon>Euteleostomi</taxon>
        <taxon>Mammalia</taxon>
        <taxon>Eutheria</taxon>
        <taxon>Euarchontoglires</taxon>
        <taxon>Glires</taxon>
        <taxon>Rodentia</taxon>
        <taxon>Myomorpha</taxon>
        <taxon>Muroidea</taxon>
        <taxon>Cricetidae</taxon>
        <taxon>Cricetinae</taxon>
        <taxon>Cricetulus</taxon>
    </lineage>
</organism>
<gene>
    <name evidence="5" type="primary">PIGV</name>
</gene>
<protein>
    <recommendedName>
        <fullName evidence="1">GPI alpha-1,6-mannosyltransferase 2</fullName>
        <ecNumber evidence="4">2.4.1.-</ecNumber>
    </recommendedName>
    <alternativeName>
        <fullName>GPI mannosyltransferase II</fullName>
        <shortName evidence="1">GPI-MT-II</shortName>
    </alternativeName>
    <alternativeName>
        <fullName evidence="1">Phosphatidylinositol-glycan biosynthesis class V protein</fullName>
        <shortName evidence="1">PIG-V</shortName>
    </alternativeName>
</protein>
<evidence type="ECO:0000250" key="1">
    <source>
        <dbReference type="UniProtKB" id="Q9NUD9"/>
    </source>
</evidence>
<evidence type="ECO:0000255" key="2"/>
<evidence type="ECO:0000255" key="3">
    <source>
        <dbReference type="RuleBase" id="RU363112"/>
    </source>
</evidence>
<evidence type="ECO:0000269" key="4">
    <source>
    </source>
</evidence>
<evidence type="ECO:0000303" key="5">
    <source>
    </source>
</evidence>
<proteinExistence type="evidence at protein level"/>
<accession>A0A8C2M425</accession>
<keyword id="KW-0256">Endoplasmic reticulum</keyword>
<keyword id="KW-0328">Glycosyltransferase</keyword>
<keyword id="KW-0337">GPI-anchor biosynthesis</keyword>
<keyword id="KW-0472">Membrane</keyword>
<keyword id="KW-0808">Transferase</keyword>
<keyword id="KW-0812">Transmembrane</keyword>
<keyword id="KW-1133">Transmembrane helix</keyword>
<comment type="function">
    <text evidence="4">Alpha-1,6-mannosyltransferase that catalyzes the transfer of the second mannose, via an alpha-1,6 bond, from a dolichol-phosphate-mannose (Dol-P-Man) to the alpha-D-Man-(1-&gt;4)-alpha-D-GlcN-(1-&gt;6)-(1-radyl,2-acyl-sn-glycero-3-phospho)-2-acyl-inositol intermediate to generate an alpha-D-Man-(1-&gt;6)-alpha-D-Man-(1-&gt;4)-alpha-D-GlcN-(1-&gt;6)-(1-radyl,2-acyl-sn-glycero-3-phospho)-2-acyl-inositol and participates in the seventh step of the glycosylphosphatidylinositol-anchor biosynthesis (PubMed:23694781). Also transfers the second mannose on a 2-PEtn-alpha-D-Man-(1-&gt;4)-alpha-D-GlcN-(1-&gt;6)-(1-radyl,2-acyl-sn-glycero-3-phospho)-2-acyl-inositol (PubMed:23694781).</text>
</comment>
<comment type="pathway">
    <text evidence="4">Glycolipid biosynthesis; glycosylphosphatidylinositol-anchor biosynthesis.</text>
</comment>
<comment type="subcellular location">
    <subcellularLocation>
        <location evidence="1">Endoplasmic reticulum membrane</location>
        <topology evidence="1">Multi-pass membrane protein</topology>
    </subcellularLocation>
</comment>
<comment type="PTM">
    <text evidence="1">Not N-glycosylated.</text>
</comment>
<comment type="similarity">
    <text evidence="3">Belongs to the PIGV family.</text>
</comment>